<evidence type="ECO:0000269" key="1">
    <source>
    </source>
</evidence>
<evidence type="ECO:0000305" key="2"/>
<evidence type="ECO:0000305" key="3">
    <source>
    </source>
</evidence>
<dbReference type="EMBL" id="ABHU01000020">
    <property type="protein sequence ID" value="EDU89568.1"/>
    <property type="molecule type" value="Genomic_DNA"/>
</dbReference>
<dbReference type="SMR" id="A0A0H3PIP6"/>
<dbReference type="BioCyc" id="ECOL478008-HMP:G76-483089-MONOMER"/>
<dbReference type="Proteomes" id="UP000004641">
    <property type="component" value="Unassembled WGS sequence"/>
</dbReference>
<comment type="function">
    <text evidence="1">Immunity protein component of a toxin-immunity protein module, which functions as a cellular contact-dependent growth inhibition (CDI) system. CDI modules allow bacteria to communicate with and inhibit the growth of closely related neighboring bacteria in a contact-dependent fashion. Neutralizes the toxic activity of cognate toxin CdiA-EC869 (the C-terminal 289 residue CT fragment). Does not inhibit toxic activity of CdiA from other toxin-immunity modules or strains of E.coli.</text>
</comment>
<comment type="subunit">
    <text evidence="3">Interacts with the C-terminal fragment (CT) of cognate toxin protein CdiA-EC869.</text>
</comment>
<gene>
    <name evidence="2" type="primary">cdiI1</name>
    <name type="ORF">ECH7EC869_5849</name>
</gene>
<organism>
    <name type="scientific">Escherichia coli O157:H7 (strain EC869)</name>
    <dbReference type="NCBI Taxonomy" id="478008"/>
    <lineage>
        <taxon>Bacteria</taxon>
        <taxon>Pseudomonadati</taxon>
        <taxon>Pseudomonadota</taxon>
        <taxon>Gammaproteobacteria</taxon>
        <taxon>Enterobacterales</taxon>
        <taxon>Enterobacteriaceae</taxon>
        <taxon>Escherichia</taxon>
    </lineage>
</organism>
<feature type="chain" id="PRO_0000447225" description="Immunity protein CdiI-1">
    <location>
        <begin position="1"/>
        <end position="86"/>
    </location>
</feature>
<reference key="1">
    <citation type="journal article" date="2011" name="Appl. Environ. Microbiol.">
        <title>Genome signatures of Escherichia coli O157:H7 isolates from the bovine host reservoir.</title>
        <authorList>
            <person name="Eppinger M."/>
            <person name="Mammel M.K."/>
            <person name="Leclerc J.E."/>
            <person name="Ravel J."/>
            <person name="Cebula T.A."/>
        </authorList>
    </citation>
    <scope>NUCLEOTIDE SEQUENCE [LARGE SCALE GENOMIC DNA]</scope>
    <source>
        <strain>EC869</strain>
    </source>
</reference>
<reference key="2">
    <citation type="journal article" date="2017" name="Proc. Natl. Acad. Sci. U.S.A.">
        <title>Activation of contact-dependent antibacterial tRNase toxins by translation elongation factors.</title>
        <authorList>
            <person name="Jones A.M."/>
            <person name="Garza-Sanchez F."/>
            <person name="So J."/>
            <person name="Hayes C.S."/>
            <person name="Low D.A."/>
        </authorList>
    </citation>
    <scope>FUNCTION</scope>
    <source>
        <strain>EC869</strain>
    </source>
</reference>
<proteinExistence type="predicted"/>
<sequence length="86" mass="9825">MNTKLWSHSESDDFSRRFVDDFSLDIEVIISSESMLLTIGENKKVTSWIKCSDNFYLGIDAGRNVVHLYLDKLTPSEVESFFEAVG</sequence>
<name>CDII1_ECO5C</name>
<protein>
    <recommendedName>
        <fullName>Immunity protein CdiI-1</fullName>
        <shortName>CdiI-EC869</shortName>
    </recommendedName>
</protein>
<accession>A0A0H3PIP6</accession>